<keyword id="KW-0903">Direct protein sequencing</keyword>
<keyword id="KW-0539">Nucleus</keyword>
<keyword id="KW-0597">Phosphoprotein</keyword>
<keyword id="KW-1185">Reference proteome</keyword>
<keyword id="KW-0804">Transcription</keyword>
<keyword id="KW-0805">Transcription regulation</keyword>
<reference key="1">
    <citation type="journal article" date="1997" name="Nature">
        <title>The nucleotide sequence of Saccharomyces cerevisiae chromosome XII.</title>
        <authorList>
            <person name="Johnston M."/>
            <person name="Hillier L.W."/>
            <person name="Riles L."/>
            <person name="Albermann K."/>
            <person name="Andre B."/>
            <person name="Ansorge W."/>
            <person name="Benes V."/>
            <person name="Brueckner M."/>
            <person name="Delius H."/>
            <person name="Dubois E."/>
            <person name="Duesterhoeft A."/>
            <person name="Entian K.-D."/>
            <person name="Floeth M."/>
            <person name="Goffeau A."/>
            <person name="Hebling U."/>
            <person name="Heumann K."/>
            <person name="Heuss-Neitzel D."/>
            <person name="Hilbert H."/>
            <person name="Hilger F."/>
            <person name="Kleine K."/>
            <person name="Koetter P."/>
            <person name="Louis E.J."/>
            <person name="Messenguy F."/>
            <person name="Mewes H.-W."/>
            <person name="Miosga T."/>
            <person name="Moestl D."/>
            <person name="Mueller-Auer S."/>
            <person name="Nentwich U."/>
            <person name="Obermaier B."/>
            <person name="Piravandi E."/>
            <person name="Pohl T.M."/>
            <person name="Portetelle D."/>
            <person name="Purnelle B."/>
            <person name="Rechmann S."/>
            <person name="Rieger M."/>
            <person name="Rinke M."/>
            <person name="Rose M."/>
            <person name="Scharfe M."/>
            <person name="Scherens B."/>
            <person name="Scholler P."/>
            <person name="Schwager C."/>
            <person name="Schwarz S."/>
            <person name="Underwood A.P."/>
            <person name="Urrestarazu L.A."/>
            <person name="Vandenbol M."/>
            <person name="Verhasselt P."/>
            <person name="Vierendeels F."/>
            <person name="Voet M."/>
            <person name="Volckaert G."/>
            <person name="Voss H."/>
            <person name="Wambutt R."/>
            <person name="Wedler E."/>
            <person name="Wedler H."/>
            <person name="Zimmermann F.K."/>
            <person name="Zollner A."/>
            <person name="Hani J."/>
            <person name="Hoheisel J.D."/>
        </authorList>
    </citation>
    <scope>NUCLEOTIDE SEQUENCE [LARGE SCALE GENOMIC DNA]</scope>
    <source>
        <strain>ATCC 204508 / S288c</strain>
    </source>
</reference>
<reference key="2">
    <citation type="journal article" date="2014" name="G3 (Bethesda)">
        <title>The reference genome sequence of Saccharomyces cerevisiae: Then and now.</title>
        <authorList>
            <person name="Engel S.R."/>
            <person name="Dietrich F.S."/>
            <person name="Fisk D.G."/>
            <person name="Binkley G."/>
            <person name="Balakrishnan R."/>
            <person name="Costanzo M.C."/>
            <person name="Dwight S.S."/>
            <person name="Hitz B.C."/>
            <person name="Karra K."/>
            <person name="Nash R.S."/>
            <person name="Weng S."/>
            <person name="Wong E.D."/>
            <person name="Lloyd P."/>
            <person name="Skrzypek M.S."/>
            <person name="Miyasato S.R."/>
            <person name="Simison M."/>
            <person name="Cherry J.M."/>
        </authorList>
    </citation>
    <scope>GENOME REANNOTATION</scope>
    <source>
        <strain>ATCC 204508 / S288c</strain>
    </source>
</reference>
<reference key="3">
    <citation type="journal article" date="2003" name="Mol. Cell">
        <title>Involvement of actin-related proteins in ATP-dependent chromatin remodeling.</title>
        <authorList>
            <person name="Shen X."/>
            <person name="Ranallo R."/>
            <person name="Choi E."/>
            <person name="Wu C."/>
        </authorList>
    </citation>
    <scope>PARTIAL PROTEIN SEQUENCE</scope>
    <scope>IDENTIFICATION IN THE INO80 COMPLEX</scope>
</reference>
<reference key="4">
    <citation type="journal article" date="2003" name="Nature">
        <title>Global analysis of protein localization in budding yeast.</title>
        <authorList>
            <person name="Huh W.-K."/>
            <person name="Falvo J.V."/>
            <person name="Gerke L.C."/>
            <person name="Carroll A.S."/>
            <person name="Howson R.W."/>
            <person name="Weissman J.S."/>
            <person name="O'Shea E.K."/>
        </authorList>
    </citation>
    <scope>SUBCELLULAR LOCATION [LARGE SCALE ANALYSIS]</scope>
</reference>
<reference key="5">
    <citation type="journal article" date="2003" name="Nature">
        <title>Global analysis of protein expression in yeast.</title>
        <authorList>
            <person name="Ghaemmaghami S."/>
            <person name="Huh W.-K."/>
            <person name="Bower K."/>
            <person name="Howson R.W."/>
            <person name="Belle A."/>
            <person name="Dephoure N."/>
            <person name="O'Shea E.K."/>
            <person name="Weissman J.S."/>
        </authorList>
    </citation>
    <scope>LEVEL OF PROTEIN EXPRESSION [LARGE SCALE ANALYSIS]</scope>
</reference>
<reference key="6">
    <citation type="journal article" date="2008" name="Mol. Cell. Proteomics">
        <title>A multidimensional chromatography technology for in-depth phosphoproteome analysis.</title>
        <authorList>
            <person name="Albuquerque C.P."/>
            <person name="Smolka M.B."/>
            <person name="Payne S.H."/>
            <person name="Bafna V."/>
            <person name="Eng J."/>
            <person name="Zhou H."/>
        </authorList>
    </citation>
    <scope>PHOSPHORYLATION [LARGE SCALE ANALYSIS] AT SER-157</scope>
    <scope>IDENTIFICATION BY MASS SPECTROMETRY [LARGE SCALE ANALYSIS]</scope>
</reference>
<reference key="7">
    <citation type="journal article" date="2009" name="Science">
        <title>Global analysis of Cdk1 substrate phosphorylation sites provides insights into evolution.</title>
        <authorList>
            <person name="Holt L.J."/>
            <person name="Tuch B.B."/>
            <person name="Villen J."/>
            <person name="Johnson A.D."/>
            <person name="Gygi S.P."/>
            <person name="Morgan D.O."/>
        </authorList>
    </citation>
    <scope>PHOSPHORYLATION [LARGE SCALE ANALYSIS] AT SER-211</scope>
    <scope>IDENTIFICATION BY MASS SPECTROMETRY [LARGE SCALE ANALYSIS]</scope>
</reference>
<evidence type="ECO:0000256" key="1">
    <source>
        <dbReference type="SAM" id="MobiDB-lite"/>
    </source>
</evidence>
<evidence type="ECO:0000269" key="2">
    <source>
    </source>
</evidence>
<evidence type="ECO:0000269" key="3">
    <source>
    </source>
</evidence>
<evidence type="ECO:0000269" key="4">
    <source>
    </source>
</evidence>
<evidence type="ECO:0007744" key="5">
    <source>
    </source>
</evidence>
<evidence type="ECO:0007744" key="6">
    <source>
    </source>
</evidence>
<organism>
    <name type="scientific">Saccharomyces cerevisiae (strain ATCC 204508 / S288c)</name>
    <name type="common">Baker's yeast</name>
    <dbReference type="NCBI Taxonomy" id="559292"/>
    <lineage>
        <taxon>Eukaryota</taxon>
        <taxon>Fungi</taxon>
        <taxon>Dikarya</taxon>
        <taxon>Ascomycota</taxon>
        <taxon>Saccharomycotina</taxon>
        <taxon>Saccharomycetes</taxon>
        <taxon>Saccharomycetales</taxon>
        <taxon>Saccharomycetaceae</taxon>
        <taxon>Saccharomyces</taxon>
    </lineage>
</organism>
<name>IES3_YEAST</name>
<accession>Q12345</accession>
<accession>D6VY54</accession>
<protein>
    <recommendedName>
        <fullName>Ino eighty subunit 3</fullName>
    </recommendedName>
</protein>
<sequence>MKFEDLLATNKQVQFAHAATQHYKSVKTPDFLEKDPHHKKFHNADGLNQQGSSTPSTATDANAASTASTHTNTTTFKRHIVAVDDISKMNYEMIKNSPGNVITNANQDEIDISTLKTRLYKDNLYAMNDNFLQAVNDQIVTLNAAEQDQETEDPDLSDDEKIDILTKIQENLLEEYQKLSQKERKWFILKELLLDANVELDLFSNRGRKASHPIAFGAVAIPTNVNANSLAFNRTKRRKINKNGLLENIL</sequence>
<feature type="chain" id="PRO_0000084155" description="Ino eighty subunit 3">
    <location>
        <begin position="1"/>
        <end position="250"/>
    </location>
</feature>
<feature type="region of interest" description="Disordered" evidence="1">
    <location>
        <begin position="29"/>
        <end position="70"/>
    </location>
</feature>
<feature type="compositionally biased region" description="Low complexity" evidence="1">
    <location>
        <begin position="52"/>
        <end position="70"/>
    </location>
</feature>
<feature type="modified residue" description="Phosphoserine" evidence="5">
    <location>
        <position position="157"/>
    </location>
</feature>
<feature type="modified residue" description="Phosphoserine" evidence="6">
    <location>
        <position position="211"/>
    </location>
</feature>
<dbReference type="EMBL" id="Z73224">
    <property type="protein sequence ID" value="CAA97582.1"/>
    <property type="molecule type" value="Genomic_DNA"/>
</dbReference>
<dbReference type="EMBL" id="X94607">
    <property type="protein sequence ID" value="CAA64299.1"/>
    <property type="molecule type" value="Genomic_DNA"/>
</dbReference>
<dbReference type="EMBL" id="BK006945">
    <property type="protein sequence ID" value="DAA09370.1"/>
    <property type="molecule type" value="Genomic_DNA"/>
</dbReference>
<dbReference type="PIR" id="S61626">
    <property type="entry name" value="S61626"/>
</dbReference>
<dbReference type="RefSeq" id="NP_013153.1">
    <property type="nucleotide sequence ID" value="NM_001181939.1"/>
</dbReference>
<dbReference type="SMR" id="Q12345"/>
<dbReference type="BioGRID" id="31327">
    <property type="interactions" value="387"/>
</dbReference>
<dbReference type="ComplexPortal" id="CPX-863">
    <property type="entry name" value="INO80 chromatin remodeling complex"/>
</dbReference>
<dbReference type="DIP" id="DIP-4830N"/>
<dbReference type="FunCoup" id="Q12345">
    <property type="interactions" value="205"/>
</dbReference>
<dbReference type="IntAct" id="Q12345">
    <property type="interactions" value="50"/>
</dbReference>
<dbReference type="MINT" id="Q12345"/>
<dbReference type="STRING" id="4932.YLR052W"/>
<dbReference type="iPTMnet" id="Q12345"/>
<dbReference type="PaxDb" id="4932-YLR052W"/>
<dbReference type="PeptideAtlas" id="Q12345"/>
<dbReference type="PRIDE" id="Q12345"/>
<dbReference type="EnsemblFungi" id="YLR052W_mRNA">
    <property type="protein sequence ID" value="YLR052W"/>
    <property type="gene ID" value="YLR052W"/>
</dbReference>
<dbReference type="GeneID" id="850741"/>
<dbReference type="KEGG" id="sce:YLR052W"/>
<dbReference type="AGR" id="SGD:S000004042"/>
<dbReference type="SGD" id="S000004042">
    <property type="gene designation" value="IES3"/>
</dbReference>
<dbReference type="VEuPathDB" id="FungiDB:YLR052W"/>
<dbReference type="eggNOG" id="ENOG502S125">
    <property type="taxonomic scope" value="Eukaryota"/>
</dbReference>
<dbReference type="HOGENOM" id="CLU_105947_0_0_1"/>
<dbReference type="InParanoid" id="Q12345"/>
<dbReference type="OMA" id="KINYEMV"/>
<dbReference type="OrthoDB" id="4063618at2759"/>
<dbReference type="BioCyc" id="YEAST:G3O-32208-MONOMER"/>
<dbReference type="BioGRID-ORCS" id="850741">
    <property type="hits" value="10 hits in 10 CRISPR screens"/>
</dbReference>
<dbReference type="PRO" id="PR:Q12345"/>
<dbReference type="Proteomes" id="UP000002311">
    <property type="component" value="Chromosome XII"/>
</dbReference>
<dbReference type="RNAct" id="Q12345">
    <property type="molecule type" value="protein"/>
</dbReference>
<dbReference type="GO" id="GO:0000781">
    <property type="term" value="C:chromosome, telomeric region"/>
    <property type="evidence" value="ECO:0007669"/>
    <property type="project" value="GOC"/>
</dbReference>
<dbReference type="GO" id="GO:0031011">
    <property type="term" value="C:Ino80 complex"/>
    <property type="evidence" value="ECO:0000314"/>
    <property type="project" value="SGD"/>
</dbReference>
<dbReference type="GO" id="GO:0005634">
    <property type="term" value="C:nucleus"/>
    <property type="evidence" value="ECO:0000314"/>
    <property type="project" value="ComplexPortal"/>
</dbReference>
<dbReference type="GO" id="GO:0006338">
    <property type="term" value="P:chromatin remodeling"/>
    <property type="evidence" value="ECO:0000314"/>
    <property type="project" value="SGD"/>
</dbReference>
<dbReference type="GO" id="GO:0006281">
    <property type="term" value="P:DNA repair"/>
    <property type="evidence" value="ECO:0000303"/>
    <property type="project" value="ComplexPortal"/>
</dbReference>
<dbReference type="GO" id="GO:0006355">
    <property type="term" value="P:regulation of DNA-templated transcription"/>
    <property type="evidence" value="ECO:0000303"/>
    <property type="project" value="ComplexPortal"/>
</dbReference>
<dbReference type="GO" id="GO:0031509">
    <property type="term" value="P:subtelomeric heterochromatin formation"/>
    <property type="evidence" value="ECO:0000315"/>
    <property type="project" value="SGD"/>
</dbReference>
<dbReference type="GO" id="GO:0000723">
    <property type="term" value="P:telomere maintenance"/>
    <property type="evidence" value="ECO:0000315"/>
    <property type="project" value="SGD"/>
</dbReference>
<dbReference type="GO" id="GO:0000722">
    <property type="term" value="P:telomere maintenance via recombination"/>
    <property type="evidence" value="ECO:0000316"/>
    <property type="project" value="SGD"/>
</dbReference>
<gene>
    <name type="primary">IES3</name>
    <name type="ordered locus">YLR052W</name>
    <name type="ORF">L2131</name>
</gene>
<comment type="function">
    <text>Probably involved in transcription regulation via its interaction with the INO80 complex, a chromatin-remodeling complex.</text>
</comment>
<comment type="subunit">
    <text evidence="2">Component of the chromatin-remodeling INO80 complex, at least composed of ARP4, ARP5, ARP8, RVB1, RVB2, TAF14, NHP10, IES1, IES3, IES4, IES6, ACT1, IES2, IES5 and INO80.</text>
</comment>
<comment type="subcellular location">
    <subcellularLocation>
        <location evidence="3">Nucleus</location>
    </subcellularLocation>
</comment>
<comment type="miscellaneous">
    <text evidence="4">Present with 2300 molecules/cell in log phase SD medium.</text>
</comment>
<proteinExistence type="evidence at protein level"/>